<protein>
    <recommendedName>
        <fullName>Acetylcholinesterase</fullName>
        <shortName>AChE</shortName>
        <ecNumber>3.1.1.7</ecNumber>
    </recommendedName>
</protein>
<feature type="signal peptide" evidence="2">
    <location>
        <begin position="1"/>
        <end position="38"/>
    </location>
</feature>
<feature type="chain" id="PRO_0000008607" description="Acetylcholinesterase">
    <location>
        <begin position="39"/>
        <end position="605"/>
    </location>
</feature>
<feature type="propeptide" id="PRO_0000008608" description="Removed in mature form" evidence="2">
    <location>
        <begin position="606"/>
        <end position="629"/>
    </location>
</feature>
<feature type="active site" description="Acyl-ester intermediate" evidence="3">
    <location>
        <position position="253"/>
    </location>
</feature>
<feature type="active site" description="Charge relay system" evidence="1">
    <location>
        <position position="382"/>
    </location>
</feature>
<feature type="active site" description="Charge relay system" evidence="1">
    <location>
        <position position="496"/>
    </location>
</feature>
<feature type="lipid moiety-binding region" description="GPI-anchor amidated serine" evidence="2">
    <location>
        <position position="605"/>
    </location>
</feature>
<feature type="glycosylation site" description="N-linked (GlcNAc...) asparagine" evidence="1">
    <location>
        <position position="125"/>
    </location>
</feature>
<feature type="glycosylation site" description="N-linked (GlcNAc...) asparagine" evidence="1">
    <location>
        <position position="308"/>
    </location>
</feature>
<feature type="glycosylation site" description="N-linked (GlcNAc...) asparagine" evidence="1">
    <location>
        <position position="418"/>
    </location>
</feature>
<feature type="glycosylation site" description="N-linked (GlcNAc...) asparagine" evidence="1">
    <location>
        <position position="509"/>
    </location>
</feature>
<feature type="disulfide bond" evidence="1">
    <location>
        <begin position="103"/>
        <end position="130"/>
    </location>
</feature>
<feature type="disulfide bond" evidence="1">
    <location>
        <begin position="307"/>
        <end position="322"/>
    </location>
</feature>
<feature type="disulfide bond" evidence="1">
    <location>
        <begin position="458"/>
        <end position="574"/>
    </location>
</feature>
<organism>
    <name type="scientific">Leptinotarsa decemlineata</name>
    <name type="common">Colorado potato beetle</name>
    <name type="synonym">Doryphora decemlineata</name>
    <dbReference type="NCBI Taxonomy" id="7539"/>
    <lineage>
        <taxon>Eukaryota</taxon>
        <taxon>Metazoa</taxon>
        <taxon>Ecdysozoa</taxon>
        <taxon>Arthropoda</taxon>
        <taxon>Hexapoda</taxon>
        <taxon>Insecta</taxon>
        <taxon>Pterygota</taxon>
        <taxon>Neoptera</taxon>
        <taxon>Endopterygota</taxon>
        <taxon>Coleoptera</taxon>
        <taxon>Polyphaga</taxon>
        <taxon>Cucujiformia</taxon>
        <taxon>Chrysomeloidea</taxon>
        <taxon>Chrysomelidae</taxon>
        <taxon>Chrysomelinae</taxon>
        <taxon>Doryphorini</taxon>
        <taxon>Leptinotarsa</taxon>
    </lineage>
</organism>
<evidence type="ECO:0000250" key="1"/>
<evidence type="ECO:0000255" key="2"/>
<evidence type="ECO:0000255" key="3">
    <source>
        <dbReference type="PROSITE-ProRule" id="PRU10039"/>
    </source>
</evidence>
<evidence type="ECO:0000305" key="4"/>
<accession>Q27677</accession>
<sequence length="629" mass="71142">MGQLSILCLFVTVCASVCGYSWPSDETTTKPSQFKDFHTDPLVVETTSGLVRGYSKTVLGREVHVFTGIPFAKPPIEQLRFKKPVPIDPWHGILDATKQPNSCFQERYEYFPGFEGEEMWNPNTNISEDCLYLNIWVPQRLRIRHHADKPTIDRPKVPVLIWIYGGGYMSGTATLDVYDADIIAATSDVIVASMQYRLGSFGFLYLNRYFPRGSDETPGNMGLWDQILAIRWIKDNAAAFGGDPDLITLFGESAGGGSISIHLISPVTKGLVRRGIMQSGTMNAPWSYMSGERAEQIGKILIQDCGCNVSLLENSPRKVMDCMRAVDAKTISLQQWNSYSGILGFPSTPTIEGVLLPKHPMDMLAEGDYEDMEILLGSNHDEGTYFLLYDFIDFFEKDGPSFLQREKYHDIIDTIFKNMSRLERDAIVFQYTNWEHVHDGYLNQKMIGDVVGDYFFVCPTNNFAEVAADRGMKVFYYYFTHRTSTSLWGEWMGVIHGDEVEYVFGHPLNMSLQFNSRERELSLKIMQAFARFATTGKPVTDDVNWPLYTKDQPQYFIFNADKNGIGKGPRATACAFWNDFLPKLRDNSGSEEAPCVNTYLSKIRSSSNELLPPSTSLVLIWIMTLLNAL</sequence>
<comment type="function">
    <text>Rapidly hydrolyzes choline released into the synapse.</text>
</comment>
<comment type="catalytic activity">
    <reaction>
        <text>acetylcholine + H2O = choline + acetate + H(+)</text>
        <dbReference type="Rhea" id="RHEA:17561"/>
        <dbReference type="ChEBI" id="CHEBI:15354"/>
        <dbReference type="ChEBI" id="CHEBI:15355"/>
        <dbReference type="ChEBI" id="CHEBI:15377"/>
        <dbReference type="ChEBI" id="CHEBI:15378"/>
        <dbReference type="ChEBI" id="CHEBI:30089"/>
        <dbReference type="EC" id="3.1.1.7"/>
    </reaction>
</comment>
<comment type="subunit">
    <text evidence="1">Homodimer; disulfide-linked.</text>
</comment>
<comment type="subcellular location">
    <subcellularLocation>
        <location evidence="1">Synapse</location>
    </subcellularLocation>
    <subcellularLocation>
        <location evidence="1">Cell membrane</location>
        <topology evidence="1">Lipid-anchor</topology>
        <topology evidence="1">GPI-anchor</topology>
    </subcellularLocation>
    <text evidence="1">Attached to the membrane of the neuronal cholinergic synapses by a GPI-anchor.</text>
</comment>
<comment type="PTM">
    <text>The N-terminus is blocked.</text>
</comment>
<comment type="similarity">
    <text evidence="4">Belongs to the type-B carboxylesterase/lipase family.</text>
</comment>
<name>ACES_LEPDE</name>
<proteinExistence type="evidence at transcript level"/>
<reference key="1">
    <citation type="journal article" date="1995" name="Insect Biochem. Mol. Biol.">
        <title>Cloning and sequencing of a cDNA encoding acetylcholinesterase in Colorado potato beetle, Leptinotarsa decemlineata (Say).</title>
        <authorList>
            <person name="Zhu K.Y."/>
            <person name="Clark J.M."/>
        </authorList>
    </citation>
    <scope>NUCLEOTIDE SEQUENCE [MRNA]</scope>
    <source>
        <strain>SS</strain>
        <tissue>Larva</tissue>
        <tissue>Pupae</tissue>
    </source>
</reference>
<keyword id="KW-1003">Cell membrane</keyword>
<keyword id="KW-1015">Disulfide bond</keyword>
<keyword id="KW-0325">Glycoprotein</keyword>
<keyword id="KW-0336">GPI-anchor</keyword>
<keyword id="KW-0378">Hydrolase</keyword>
<keyword id="KW-0449">Lipoprotein</keyword>
<keyword id="KW-0472">Membrane</keyword>
<keyword id="KW-0531">Neurotransmitter degradation</keyword>
<keyword id="KW-0719">Serine esterase</keyword>
<keyword id="KW-0732">Signal</keyword>
<keyword id="KW-0770">Synapse</keyword>
<dbReference type="EC" id="3.1.1.7"/>
<dbReference type="EMBL" id="L41180">
    <property type="protein sequence ID" value="AAB00466.1"/>
    <property type="molecule type" value="mRNA"/>
</dbReference>
<dbReference type="SMR" id="Q27677"/>
<dbReference type="ChEMBL" id="CHEMBL2366490"/>
<dbReference type="ESTHER" id="lepde-ACHE">
    <property type="family name" value="ACHE"/>
</dbReference>
<dbReference type="MEROPS" id="S09.980"/>
<dbReference type="OrthoDB" id="408631at2759"/>
<dbReference type="GO" id="GO:0005615">
    <property type="term" value="C:extracellular space"/>
    <property type="evidence" value="ECO:0007669"/>
    <property type="project" value="TreeGrafter"/>
</dbReference>
<dbReference type="GO" id="GO:0005886">
    <property type="term" value="C:plasma membrane"/>
    <property type="evidence" value="ECO:0007669"/>
    <property type="project" value="UniProtKB-SubCell"/>
</dbReference>
<dbReference type="GO" id="GO:0098552">
    <property type="term" value="C:side of membrane"/>
    <property type="evidence" value="ECO:0007669"/>
    <property type="project" value="UniProtKB-KW"/>
</dbReference>
<dbReference type="GO" id="GO:0045202">
    <property type="term" value="C:synapse"/>
    <property type="evidence" value="ECO:0007669"/>
    <property type="project" value="UniProtKB-SubCell"/>
</dbReference>
<dbReference type="GO" id="GO:0043083">
    <property type="term" value="C:synaptic cleft"/>
    <property type="evidence" value="ECO:0007669"/>
    <property type="project" value="GOC"/>
</dbReference>
<dbReference type="GO" id="GO:0003990">
    <property type="term" value="F:acetylcholinesterase activity"/>
    <property type="evidence" value="ECO:0007669"/>
    <property type="project" value="UniProtKB-EC"/>
</dbReference>
<dbReference type="GO" id="GO:0001507">
    <property type="term" value="P:acetylcholine catabolic process in synaptic cleft"/>
    <property type="evidence" value="ECO:0007669"/>
    <property type="project" value="InterPro"/>
</dbReference>
<dbReference type="GO" id="GO:0019695">
    <property type="term" value="P:choline metabolic process"/>
    <property type="evidence" value="ECO:0007669"/>
    <property type="project" value="TreeGrafter"/>
</dbReference>
<dbReference type="CDD" id="cd00312">
    <property type="entry name" value="Esterase_lipase"/>
    <property type="match status" value="1"/>
</dbReference>
<dbReference type="FunFam" id="3.40.50.1820:FF:000029">
    <property type="entry name" value="Acetylcholinesterase"/>
    <property type="match status" value="1"/>
</dbReference>
<dbReference type="Gene3D" id="3.40.50.1820">
    <property type="entry name" value="alpha/beta hydrolase"/>
    <property type="match status" value="1"/>
</dbReference>
<dbReference type="InterPro" id="IPR029058">
    <property type="entry name" value="AB_hydrolase_fold"/>
</dbReference>
<dbReference type="InterPro" id="IPR050654">
    <property type="entry name" value="AChE-related_enzymes"/>
</dbReference>
<dbReference type="InterPro" id="IPR001445">
    <property type="entry name" value="Acylcholinesterase_insect"/>
</dbReference>
<dbReference type="InterPro" id="IPR002018">
    <property type="entry name" value="CarbesteraseB"/>
</dbReference>
<dbReference type="InterPro" id="IPR019826">
    <property type="entry name" value="Carboxylesterase_B_AS"/>
</dbReference>
<dbReference type="InterPro" id="IPR019819">
    <property type="entry name" value="Carboxylesterase_B_CS"/>
</dbReference>
<dbReference type="InterPro" id="IPR000997">
    <property type="entry name" value="Cholinesterase"/>
</dbReference>
<dbReference type="PANTHER" id="PTHR43918">
    <property type="entry name" value="ACETYLCHOLINESTERASE"/>
    <property type="match status" value="1"/>
</dbReference>
<dbReference type="PANTHER" id="PTHR43918:SF13">
    <property type="entry name" value="ACETYLCHOLINESTERASE"/>
    <property type="match status" value="1"/>
</dbReference>
<dbReference type="Pfam" id="PF00135">
    <property type="entry name" value="COesterase"/>
    <property type="match status" value="1"/>
</dbReference>
<dbReference type="PRINTS" id="PR00880">
    <property type="entry name" value="ACHEINSECT"/>
</dbReference>
<dbReference type="PRINTS" id="PR00878">
    <property type="entry name" value="CHOLNESTRASE"/>
</dbReference>
<dbReference type="SUPFAM" id="SSF53474">
    <property type="entry name" value="alpha/beta-Hydrolases"/>
    <property type="match status" value="1"/>
</dbReference>
<dbReference type="PROSITE" id="PS00122">
    <property type="entry name" value="CARBOXYLESTERASE_B_1"/>
    <property type="match status" value="1"/>
</dbReference>
<dbReference type="PROSITE" id="PS00941">
    <property type="entry name" value="CARBOXYLESTERASE_B_2"/>
    <property type="match status" value="1"/>
</dbReference>